<proteinExistence type="inferred from homology"/>
<reference evidence="5" key="1">
    <citation type="journal article" date="2002" name="Nature">
        <title>Sequence and analysis of chromosome 2 of Dictyostelium discoideum.</title>
        <authorList>
            <person name="Gloeckner G."/>
            <person name="Eichinger L."/>
            <person name="Szafranski K."/>
            <person name="Pachebat J.A."/>
            <person name="Bankier A.T."/>
            <person name="Dear P.H."/>
            <person name="Lehmann R."/>
            <person name="Baumgart C."/>
            <person name="Parra G."/>
            <person name="Abril J.F."/>
            <person name="Guigo R."/>
            <person name="Kumpf K."/>
            <person name="Tunggal B."/>
            <person name="Cox E.C."/>
            <person name="Quail M.A."/>
            <person name="Platzer M."/>
            <person name="Rosenthal A."/>
            <person name="Noegel A.A."/>
        </authorList>
    </citation>
    <scope>NUCLEOTIDE SEQUENCE [LARGE SCALE GENOMIC DNA]</scope>
    <source>
        <strain>AX4</strain>
    </source>
</reference>
<reference evidence="5 6" key="2">
    <citation type="journal article" date="2005" name="Nature">
        <title>The genome of the social amoeba Dictyostelium discoideum.</title>
        <authorList>
            <person name="Eichinger L."/>
            <person name="Pachebat J.A."/>
            <person name="Gloeckner G."/>
            <person name="Rajandream M.A."/>
            <person name="Sucgang R."/>
            <person name="Berriman M."/>
            <person name="Song J."/>
            <person name="Olsen R."/>
            <person name="Szafranski K."/>
            <person name="Xu Q."/>
            <person name="Tunggal B."/>
            <person name="Kummerfeld S."/>
            <person name="Madera M."/>
            <person name="Konfortov B.A."/>
            <person name="Rivero F."/>
            <person name="Bankier A.T."/>
            <person name="Lehmann R."/>
            <person name="Hamlin N."/>
            <person name="Davies R."/>
            <person name="Gaudet P."/>
            <person name="Fey P."/>
            <person name="Pilcher K."/>
            <person name="Chen G."/>
            <person name="Saunders D."/>
            <person name="Sodergren E.J."/>
            <person name="Davis P."/>
            <person name="Kerhornou A."/>
            <person name="Nie X."/>
            <person name="Hall N."/>
            <person name="Anjard C."/>
            <person name="Hemphill L."/>
            <person name="Bason N."/>
            <person name="Farbrother P."/>
            <person name="Desany B."/>
            <person name="Just E."/>
            <person name="Morio T."/>
            <person name="Rost R."/>
            <person name="Churcher C.M."/>
            <person name="Cooper J."/>
            <person name="Haydock S."/>
            <person name="van Driessche N."/>
            <person name="Cronin A."/>
            <person name="Goodhead I."/>
            <person name="Muzny D.M."/>
            <person name="Mourier T."/>
            <person name="Pain A."/>
            <person name="Lu M."/>
            <person name="Harper D."/>
            <person name="Lindsay R."/>
            <person name="Hauser H."/>
            <person name="James K.D."/>
            <person name="Quiles M."/>
            <person name="Madan Babu M."/>
            <person name="Saito T."/>
            <person name="Buchrieser C."/>
            <person name="Wardroper A."/>
            <person name="Felder M."/>
            <person name="Thangavelu M."/>
            <person name="Johnson D."/>
            <person name="Knights A."/>
            <person name="Loulseged H."/>
            <person name="Mungall K.L."/>
            <person name="Oliver K."/>
            <person name="Price C."/>
            <person name="Quail M.A."/>
            <person name="Urushihara H."/>
            <person name="Hernandez J."/>
            <person name="Rabbinowitsch E."/>
            <person name="Steffen D."/>
            <person name="Sanders M."/>
            <person name="Ma J."/>
            <person name="Kohara Y."/>
            <person name="Sharp S."/>
            <person name="Simmonds M.N."/>
            <person name="Spiegler S."/>
            <person name="Tivey A."/>
            <person name="Sugano S."/>
            <person name="White B."/>
            <person name="Walker D."/>
            <person name="Woodward J.R."/>
            <person name="Winckler T."/>
            <person name="Tanaka Y."/>
            <person name="Shaulsky G."/>
            <person name="Schleicher M."/>
            <person name="Weinstock G.M."/>
            <person name="Rosenthal A."/>
            <person name="Cox E.C."/>
            <person name="Chisholm R.L."/>
            <person name="Gibbs R.A."/>
            <person name="Loomis W.F."/>
            <person name="Platzer M."/>
            <person name="Kay R.R."/>
            <person name="Williams J.G."/>
            <person name="Dear P.H."/>
            <person name="Noegel A.A."/>
            <person name="Barrell B.G."/>
            <person name="Kuspa A."/>
        </authorList>
    </citation>
    <scope>NUCLEOTIDE SEQUENCE [LARGE SCALE GENOMIC DNA]</scope>
    <source>
        <strain evidence="6">AX4</strain>
    </source>
</reference>
<organism>
    <name type="scientific">Dictyostelium discoideum</name>
    <name type="common">Social amoeba</name>
    <dbReference type="NCBI Taxonomy" id="44689"/>
    <lineage>
        <taxon>Eukaryota</taxon>
        <taxon>Amoebozoa</taxon>
        <taxon>Evosea</taxon>
        <taxon>Eumycetozoa</taxon>
        <taxon>Dictyostelia</taxon>
        <taxon>Dictyosteliales</taxon>
        <taxon>Dictyosteliaceae</taxon>
        <taxon>Dictyostelium</taxon>
    </lineage>
</organism>
<comment type="catalytic activity">
    <reaction>
        <text>L-cysteinyl-[protein] + hexadecanoyl-CoA = S-hexadecanoyl-L-cysteinyl-[protein] + CoA</text>
        <dbReference type="Rhea" id="RHEA:36683"/>
        <dbReference type="Rhea" id="RHEA-COMP:10131"/>
        <dbReference type="Rhea" id="RHEA-COMP:11032"/>
        <dbReference type="ChEBI" id="CHEBI:29950"/>
        <dbReference type="ChEBI" id="CHEBI:57287"/>
        <dbReference type="ChEBI" id="CHEBI:57379"/>
        <dbReference type="ChEBI" id="CHEBI:74151"/>
        <dbReference type="EC" id="2.3.1.225"/>
    </reaction>
</comment>
<comment type="subcellular location">
    <subcellularLocation>
        <location evidence="2">Membrane</location>
        <topology evidence="2">Multi-pass membrane protein</topology>
    </subcellularLocation>
</comment>
<comment type="domain">
    <text evidence="1">The DHHC domain is required for palmitoyltransferase activity.</text>
</comment>
<comment type="similarity">
    <text evidence="2">Belongs to the DHHC palmitoyltransferase family.</text>
</comment>
<name>ZDHC4_DICDI</name>
<evidence type="ECO:0000250" key="1">
    <source>
        <dbReference type="UniProtKB" id="Q9UIJ5"/>
    </source>
</evidence>
<evidence type="ECO:0000255" key="2"/>
<evidence type="ECO:0000255" key="3">
    <source>
        <dbReference type="PROSITE-ProRule" id="PRU00067"/>
    </source>
</evidence>
<evidence type="ECO:0000256" key="4">
    <source>
        <dbReference type="SAM" id="MobiDB-lite"/>
    </source>
</evidence>
<evidence type="ECO:0000305" key="5"/>
<evidence type="ECO:0000312" key="6">
    <source>
        <dbReference type="EMBL" id="EAL70018.1"/>
    </source>
</evidence>
<gene>
    <name type="ORF">DDB_G0274251</name>
</gene>
<feature type="chain" id="PRO_0000259993" description="Putative ZDHHC-type palmitoyltransferase 4">
    <location>
        <begin position="1"/>
        <end position="358"/>
    </location>
</feature>
<feature type="transmembrane region" description="Helical" evidence="2">
    <location>
        <begin position="28"/>
        <end position="48"/>
    </location>
</feature>
<feature type="transmembrane region" description="Helical" evidence="2">
    <location>
        <begin position="57"/>
        <end position="77"/>
    </location>
</feature>
<feature type="transmembrane region" description="Helical" evidence="2">
    <location>
        <begin position="171"/>
        <end position="191"/>
    </location>
</feature>
<feature type="transmembrane region" description="Helical" evidence="2">
    <location>
        <begin position="210"/>
        <end position="230"/>
    </location>
</feature>
<feature type="domain" description="DHHC" evidence="3">
    <location>
        <begin position="127"/>
        <end position="177"/>
    </location>
</feature>
<feature type="region of interest" description="Disordered" evidence="4">
    <location>
        <begin position="302"/>
        <end position="358"/>
    </location>
</feature>
<feature type="compositionally biased region" description="Low complexity" evidence="4">
    <location>
        <begin position="305"/>
        <end position="332"/>
    </location>
</feature>
<feature type="glycosylation site" description="N-linked (GlcNAc...) asparagine" evidence="2">
    <location>
        <position position="255"/>
    </location>
</feature>
<feature type="glycosylation site" description="N-linked (GlcNAc...) asparagine" evidence="2">
    <location>
        <position position="296"/>
    </location>
</feature>
<keyword id="KW-0012">Acyltransferase</keyword>
<keyword id="KW-0325">Glycoprotein</keyword>
<keyword id="KW-0449">Lipoprotein</keyword>
<keyword id="KW-0472">Membrane</keyword>
<keyword id="KW-0564">Palmitate</keyword>
<keyword id="KW-1185">Reference proteome</keyword>
<keyword id="KW-0808">Transferase</keyword>
<keyword id="KW-0812">Transmembrane</keyword>
<keyword id="KW-1133">Transmembrane helix</keyword>
<accession>Q555N7</accession>
<accession>Q86KK7</accession>
<sequence length="358" mass="41023">MSKLNIKGIVKRCDDYGKLVNRYCGPVFVGFATSLITLIAITYFTIIFPATSDFSNLFFIFNFFCDLSISLFLTYGIYFNYIKAIITKPGYPNLNSTLINNINSNINNSNNNKDKDKILIIDNVKWSYCKKCSKAKPPRCHHCSVCDKCVLKMDHHCPWIGGCVGFYNYRYFFLFLSYLWVSVCYVLAHSLPLLFGGYLYSKKYTEIDRLLVIISSIGSFITFVAVGSFGGFHAYLIGSGQTSIENLYPPKKRPNYSLTSIKDNFQIVLGKGDYWFSGLLPINYTPIGNGCDFKLNISNEDNNKNNENNENNENNEIDNHNNNNNNNNNNNNNEKEDNINENDNLISYDTDEYNRHKK</sequence>
<dbReference type="EC" id="2.3.1.225"/>
<dbReference type="EMBL" id="AAFI02000012">
    <property type="protein sequence ID" value="EAL70018.1"/>
    <property type="molecule type" value="Genomic_DNA"/>
</dbReference>
<dbReference type="RefSeq" id="XP_644028.1">
    <property type="nucleotide sequence ID" value="XM_638936.1"/>
</dbReference>
<dbReference type="SMR" id="Q555N7"/>
<dbReference type="FunCoup" id="Q555N7">
    <property type="interactions" value="6"/>
</dbReference>
<dbReference type="GlyGen" id="Q555N7">
    <property type="glycosylation" value="2 sites"/>
</dbReference>
<dbReference type="PaxDb" id="44689-DDB0167795"/>
<dbReference type="EnsemblProtists" id="EAL70018">
    <property type="protein sequence ID" value="EAL70018"/>
    <property type="gene ID" value="DDB_G0274251"/>
</dbReference>
<dbReference type="GeneID" id="8619458"/>
<dbReference type="KEGG" id="ddi:DDB_G0274251"/>
<dbReference type="dictyBase" id="DDB_G0274251"/>
<dbReference type="VEuPathDB" id="AmoebaDB:DDB_G0274251"/>
<dbReference type="eggNOG" id="KOG1315">
    <property type="taxonomic scope" value="Eukaryota"/>
</dbReference>
<dbReference type="HOGENOM" id="CLU_774832_0_0_1"/>
<dbReference type="InParanoid" id="Q555N7"/>
<dbReference type="OMA" id="FHTIMIA"/>
<dbReference type="PhylomeDB" id="Q555N7"/>
<dbReference type="PRO" id="PR:Q555N7"/>
<dbReference type="Proteomes" id="UP000002195">
    <property type="component" value="Chromosome 2"/>
</dbReference>
<dbReference type="GO" id="GO:0005783">
    <property type="term" value="C:endoplasmic reticulum"/>
    <property type="evidence" value="ECO:0000318"/>
    <property type="project" value="GO_Central"/>
</dbReference>
<dbReference type="GO" id="GO:0005794">
    <property type="term" value="C:Golgi apparatus"/>
    <property type="evidence" value="ECO:0000318"/>
    <property type="project" value="GO_Central"/>
</dbReference>
<dbReference type="GO" id="GO:0016020">
    <property type="term" value="C:membrane"/>
    <property type="evidence" value="ECO:0007669"/>
    <property type="project" value="UniProtKB-SubCell"/>
</dbReference>
<dbReference type="GO" id="GO:0019706">
    <property type="term" value="F:protein-cysteine S-palmitoyltransferase activity"/>
    <property type="evidence" value="ECO:0000318"/>
    <property type="project" value="GO_Central"/>
</dbReference>
<dbReference type="GO" id="GO:0006612">
    <property type="term" value="P:protein targeting to membrane"/>
    <property type="evidence" value="ECO:0000318"/>
    <property type="project" value="GO_Central"/>
</dbReference>
<dbReference type="InterPro" id="IPR001594">
    <property type="entry name" value="Palmitoyltrfase_DHHC"/>
</dbReference>
<dbReference type="InterPro" id="IPR039859">
    <property type="entry name" value="PFA4/ZDH16/20/ERF2-like"/>
</dbReference>
<dbReference type="PANTHER" id="PTHR12246">
    <property type="entry name" value="PALMITOYLTRANSFERASE ZDHHC16"/>
    <property type="match status" value="1"/>
</dbReference>
<dbReference type="Pfam" id="PF01529">
    <property type="entry name" value="DHHC"/>
    <property type="match status" value="1"/>
</dbReference>
<dbReference type="PROSITE" id="PS50216">
    <property type="entry name" value="DHHC"/>
    <property type="match status" value="1"/>
</dbReference>
<protein>
    <recommendedName>
        <fullName>Putative ZDHHC-type palmitoyltransferase 4</fullName>
        <ecNumber>2.3.1.225</ecNumber>
    </recommendedName>
    <alternativeName>
        <fullName>Zinc finger DHHC domain-containing protein 4</fullName>
    </alternativeName>
</protein>